<dbReference type="EMBL" id="BC161864">
    <property type="protein sequence ID" value="AAI61864.1"/>
    <property type="molecule type" value="mRNA"/>
</dbReference>
<dbReference type="RefSeq" id="NP_001119774.1">
    <property type="nucleotide sequence ID" value="NM_001126302.1"/>
</dbReference>
<dbReference type="SMR" id="B1WBS3"/>
<dbReference type="FunCoup" id="B1WBS3">
    <property type="interactions" value="29"/>
</dbReference>
<dbReference type="STRING" id="10116.ENSRNOP00000035859"/>
<dbReference type="PhosphoSitePlus" id="B1WBS3"/>
<dbReference type="PaxDb" id="10116-ENSRNOP00000035859"/>
<dbReference type="Ensembl" id="ENSRNOT00000030879.5">
    <property type="protein sequence ID" value="ENSRNOP00000035859.4"/>
    <property type="gene ID" value="ENSRNOG00000037562.3"/>
</dbReference>
<dbReference type="GeneID" id="691556"/>
<dbReference type="KEGG" id="rno:691556"/>
<dbReference type="UCSC" id="RGD:1582758">
    <property type="organism name" value="rat"/>
</dbReference>
<dbReference type="AGR" id="RGD:1582758"/>
<dbReference type="CTD" id="100128927"/>
<dbReference type="RGD" id="1582758">
    <property type="gene designation" value="Zbtb42"/>
</dbReference>
<dbReference type="eggNOG" id="KOG1721">
    <property type="taxonomic scope" value="Eukaryota"/>
</dbReference>
<dbReference type="GeneTree" id="ENSGT00940000163959"/>
<dbReference type="HOGENOM" id="CLU_034521_0_0_1"/>
<dbReference type="InParanoid" id="B1WBS3"/>
<dbReference type="OMA" id="HPPCILQ"/>
<dbReference type="OrthoDB" id="4748970at2759"/>
<dbReference type="PhylomeDB" id="B1WBS3"/>
<dbReference type="TreeFam" id="TF337437"/>
<dbReference type="PRO" id="PR:B1WBS3"/>
<dbReference type="Proteomes" id="UP000002494">
    <property type="component" value="Chromosome 6"/>
</dbReference>
<dbReference type="Bgee" id="ENSRNOG00000037562">
    <property type="expression patterns" value="Expressed in testis and 18 other cell types or tissues"/>
</dbReference>
<dbReference type="GO" id="GO:0005737">
    <property type="term" value="C:cytoplasm"/>
    <property type="evidence" value="ECO:0000266"/>
    <property type="project" value="RGD"/>
</dbReference>
<dbReference type="GO" id="GO:0005654">
    <property type="term" value="C:nucleoplasm"/>
    <property type="evidence" value="ECO:0000250"/>
    <property type="project" value="UniProtKB"/>
</dbReference>
<dbReference type="GO" id="GO:0005634">
    <property type="term" value="C:nucleus"/>
    <property type="evidence" value="ECO:0000250"/>
    <property type="project" value="UniProtKB"/>
</dbReference>
<dbReference type="GO" id="GO:0003677">
    <property type="term" value="F:DNA binding"/>
    <property type="evidence" value="ECO:0007669"/>
    <property type="project" value="UniProtKB-KW"/>
</dbReference>
<dbReference type="GO" id="GO:0000981">
    <property type="term" value="F:DNA-binding transcription factor activity, RNA polymerase II-specific"/>
    <property type="evidence" value="ECO:0000318"/>
    <property type="project" value="GO_Central"/>
</dbReference>
<dbReference type="GO" id="GO:0008270">
    <property type="term" value="F:zinc ion binding"/>
    <property type="evidence" value="ECO:0007669"/>
    <property type="project" value="UniProtKB-KW"/>
</dbReference>
<dbReference type="GO" id="GO:0007517">
    <property type="term" value="P:muscle organ development"/>
    <property type="evidence" value="ECO:0000250"/>
    <property type="project" value="UniProtKB"/>
</dbReference>
<dbReference type="GO" id="GO:0000122">
    <property type="term" value="P:negative regulation of transcription by RNA polymerase II"/>
    <property type="evidence" value="ECO:0000266"/>
    <property type="project" value="RGD"/>
</dbReference>
<dbReference type="GO" id="GO:0006357">
    <property type="term" value="P:regulation of transcription by RNA polymerase II"/>
    <property type="evidence" value="ECO:0000318"/>
    <property type="project" value="GO_Central"/>
</dbReference>
<dbReference type="CDD" id="cd18956">
    <property type="entry name" value="BTB_POZ_ZBTB42"/>
    <property type="match status" value="1"/>
</dbReference>
<dbReference type="FunFam" id="3.30.160.60:FF:000114">
    <property type="entry name" value="Zinc finger and BTB domain-containing protein 18"/>
    <property type="match status" value="1"/>
</dbReference>
<dbReference type="FunFam" id="3.30.160.60:FF:000220">
    <property type="entry name" value="Zinc finger and BTB domain-containing protein 18"/>
    <property type="match status" value="1"/>
</dbReference>
<dbReference type="FunFam" id="3.30.710.10:FF:000021">
    <property type="entry name" value="Zinc finger and BTB domain-containing protein 18"/>
    <property type="match status" value="1"/>
</dbReference>
<dbReference type="FunFam" id="3.30.160.60:FF:000096">
    <property type="entry name" value="Zinc finger and BTB domain-containing protein 18 isoform 1"/>
    <property type="match status" value="1"/>
</dbReference>
<dbReference type="Gene3D" id="3.30.160.60">
    <property type="entry name" value="Classic Zinc Finger"/>
    <property type="match status" value="3"/>
</dbReference>
<dbReference type="Gene3D" id="3.30.710.10">
    <property type="entry name" value="Potassium Channel Kv1.1, Chain A"/>
    <property type="match status" value="1"/>
</dbReference>
<dbReference type="InterPro" id="IPR000210">
    <property type="entry name" value="BTB/POZ_dom"/>
</dbReference>
<dbReference type="InterPro" id="IPR011333">
    <property type="entry name" value="SKP1/BTB/POZ_sf"/>
</dbReference>
<dbReference type="InterPro" id="IPR036236">
    <property type="entry name" value="Znf_C2H2_sf"/>
</dbReference>
<dbReference type="InterPro" id="IPR013087">
    <property type="entry name" value="Znf_C2H2_type"/>
</dbReference>
<dbReference type="PANTHER" id="PTHR24394:SF20">
    <property type="entry name" value="ZINC FINGER AND BTB DOMAIN-CONTAINING PROTEIN 42"/>
    <property type="match status" value="1"/>
</dbReference>
<dbReference type="PANTHER" id="PTHR24394">
    <property type="entry name" value="ZINC FINGER PROTEIN"/>
    <property type="match status" value="1"/>
</dbReference>
<dbReference type="Pfam" id="PF00651">
    <property type="entry name" value="BTB"/>
    <property type="match status" value="1"/>
</dbReference>
<dbReference type="Pfam" id="PF00096">
    <property type="entry name" value="zf-C2H2"/>
    <property type="match status" value="2"/>
</dbReference>
<dbReference type="Pfam" id="PF13894">
    <property type="entry name" value="zf-C2H2_4"/>
    <property type="match status" value="1"/>
</dbReference>
<dbReference type="SMART" id="SM00225">
    <property type="entry name" value="BTB"/>
    <property type="match status" value="1"/>
</dbReference>
<dbReference type="SMART" id="SM00355">
    <property type="entry name" value="ZnF_C2H2"/>
    <property type="match status" value="4"/>
</dbReference>
<dbReference type="SUPFAM" id="SSF57667">
    <property type="entry name" value="beta-beta-alpha zinc fingers"/>
    <property type="match status" value="2"/>
</dbReference>
<dbReference type="SUPFAM" id="SSF54695">
    <property type="entry name" value="POZ domain"/>
    <property type="match status" value="1"/>
</dbReference>
<dbReference type="PROSITE" id="PS50097">
    <property type="entry name" value="BTB"/>
    <property type="match status" value="1"/>
</dbReference>
<dbReference type="PROSITE" id="PS00028">
    <property type="entry name" value="ZINC_FINGER_C2H2_1"/>
    <property type="match status" value="4"/>
</dbReference>
<dbReference type="PROSITE" id="PS50157">
    <property type="entry name" value="ZINC_FINGER_C2H2_2"/>
    <property type="match status" value="4"/>
</dbReference>
<feature type="chain" id="PRO_0000343712" description="Zinc finger and BTB domain-containing protein 42">
    <location>
        <begin position="1"/>
        <end position="420"/>
    </location>
</feature>
<feature type="domain" description="BTB" evidence="2">
    <location>
        <begin position="24"/>
        <end position="92"/>
    </location>
</feature>
<feature type="zinc finger region" description="C2H2-type 1" evidence="3">
    <location>
        <begin position="292"/>
        <end position="314"/>
    </location>
</feature>
<feature type="zinc finger region" description="C2H2-type 2" evidence="3">
    <location>
        <begin position="332"/>
        <end position="354"/>
    </location>
</feature>
<feature type="zinc finger region" description="C2H2-type 3" evidence="3">
    <location>
        <begin position="360"/>
        <end position="382"/>
    </location>
</feature>
<feature type="zinc finger region" description="C2H2-type 4" evidence="3">
    <location>
        <begin position="388"/>
        <end position="411"/>
    </location>
</feature>
<feature type="region of interest" description="Disordered" evidence="4">
    <location>
        <begin position="174"/>
        <end position="204"/>
    </location>
</feature>
<feature type="region of interest" description="Disordered" evidence="4">
    <location>
        <begin position="216"/>
        <end position="248"/>
    </location>
</feature>
<feature type="compositionally biased region" description="Low complexity" evidence="4">
    <location>
        <begin position="227"/>
        <end position="241"/>
    </location>
</feature>
<accession>B1WBS3</accession>
<organism>
    <name type="scientific">Rattus norvegicus</name>
    <name type="common">Rat</name>
    <dbReference type="NCBI Taxonomy" id="10116"/>
    <lineage>
        <taxon>Eukaryota</taxon>
        <taxon>Metazoa</taxon>
        <taxon>Chordata</taxon>
        <taxon>Craniata</taxon>
        <taxon>Vertebrata</taxon>
        <taxon>Euteleostomi</taxon>
        <taxon>Mammalia</taxon>
        <taxon>Eutheria</taxon>
        <taxon>Euarchontoglires</taxon>
        <taxon>Glires</taxon>
        <taxon>Rodentia</taxon>
        <taxon>Myomorpha</taxon>
        <taxon>Muroidea</taxon>
        <taxon>Muridae</taxon>
        <taxon>Murinae</taxon>
        <taxon>Rattus</taxon>
    </lineage>
</organism>
<name>ZBT42_RAT</name>
<gene>
    <name type="primary">Zbtb42</name>
</gene>
<proteinExistence type="evidence at transcript level"/>
<comment type="function">
    <text evidence="1">Transcriptional repressor. Specifically binds DNA and probably acts by recruiting chromatin remodeling multiprotein complexes.</text>
</comment>
<comment type="subcellular location">
    <subcellularLocation>
        <location evidence="1">Cytoplasm</location>
    </subcellularLocation>
    <subcellularLocation>
        <location evidence="1">Nucleus</location>
        <location evidence="1">Nucleoplasm</location>
    </subcellularLocation>
</comment>
<comment type="similarity">
    <text evidence="5">Belongs to the krueppel C2H2-type zinc-finger protein family. ZBTB18 subfamily.</text>
</comment>
<protein>
    <recommendedName>
        <fullName>Zinc finger and BTB domain-containing protein 42</fullName>
    </recommendedName>
</protein>
<evidence type="ECO:0000250" key="1">
    <source>
        <dbReference type="UniProtKB" id="Q811H0"/>
    </source>
</evidence>
<evidence type="ECO:0000255" key="2">
    <source>
        <dbReference type="PROSITE-ProRule" id="PRU00037"/>
    </source>
</evidence>
<evidence type="ECO:0000255" key="3">
    <source>
        <dbReference type="PROSITE-ProRule" id="PRU00042"/>
    </source>
</evidence>
<evidence type="ECO:0000256" key="4">
    <source>
        <dbReference type="SAM" id="MobiDB-lite"/>
    </source>
</evidence>
<evidence type="ECO:0000305" key="5"/>
<sequence length="420" mass="46628">MEFPEHGVRLLGRLRQQRELGFLCDCTVLVGDARFPAHRAVLAACSVYFHLFYRDQPASSRDTVRLNGDIVTVPAFSRLLDFMYEGRLDLHSLPVEDVLAAASYLHMYDIVKVCKGRLRKKDPDLETRTLGTELPGQTPHPLPSWPPAFCQATPKAKPPSLGVKAVHPLPKFGPPSWQVSEESSGALDLSLKPGPRPEQAHPPCLLQTSQCSSIQQGAQPLVKAEQDSFSEQDSSSPQSADRSPPPVCASAARGLAVNLEPLHIQGTGSQQLGLHAEPVVDSEDLGPGRHLCICPLCCKLFPSTHALQPHLSAHFRERDSVRTRLSPEGAVPTCPLCSKTFSCTYTLKRHERTHSGEKPYTCVQCGKSFQYSHNLSRHAVVHTREKPHACRWCERRFTQSGDLYRHVRKFHYGLVKPLLV</sequence>
<keyword id="KW-0963">Cytoplasm</keyword>
<keyword id="KW-0238">DNA-binding</keyword>
<keyword id="KW-0479">Metal-binding</keyword>
<keyword id="KW-0539">Nucleus</keyword>
<keyword id="KW-1185">Reference proteome</keyword>
<keyword id="KW-0677">Repeat</keyword>
<keyword id="KW-0678">Repressor</keyword>
<keyword id="KW-0804">Transcription</keyword>
<keyword id="KW-0805">Transcription regulation</keyword>
<keyword id="KW-0862">Zinc</keyword>
<keyword id="KW-0863">Zinc-finger</keyword>
<reference key="1">
    <citation type="journal article" date="2004" name="Genome Res.">
        <title>The status, quality, and expansion of the NIH full-length cDNA project: the Mammalian Gene Collection (MGC).</title>
        <authorList>
            <consortium name="The MGC Project Team"/>
        </authorList>
    </citation>
    <scope>NUCLEOTIDE SEQUENCE [LARGE SCALE MRNA]</scope>
    <source>
        <tissue>Lung</tissue>
    </source>
</reference>